<keyword id="KW-0238">DNA-binding</keyword>
<keyword id="KW-0479">Metal-binding</keyword>
<keyword id="KW-0539">Nucleus</keyword>
<keyword id="KW-0804">Transcription</keyword>
<keyword id="KW-0805">Transcription regulation</keyword>
<keyword id="KW-0862">Zinc</keyword>
<evidence type="ECO:0000255" key="1">
    <source>
        <dbReference type="PROSITE-ProRule" id="PRU00227"/>
    </source>
</evidence>
<evidence type="ECO:0000256" key="2">
    <source>
        <dbReference type="SAM" id="MobiDB-lite"/>
    </source>
</evidence>
<evidence type="ECO:0000269" key="3">
    <source>
    </source>
</evidence>
<evidence type="ECO:0000303" key="4">
    <source>
    </source>
</evidence>
<sequence length="417" mass="45717">MNFSEQFTGRSEPGRKANRTSNNNTNSTTNVATVTTDDSNRPACDRCKGQKLRCIWENGSNTCRRCTRARAVCQQPRPRPFGRPRCSTKSKHHVAQNQANTKIWVSSTTQQPQENDAEMPMATSDDHDPTSFLSSTAVDLPRYLGLASFPTDPSLQIAISPPHGVHGNSFNLETGLLGNFSDAQFKNPATFYQPQGFINAANPATPAPVPVPASAPVSADGASLFEFDPDDISGDSEHSHCHWLKQLGDLNVAIYQHPLHPKPAGVSTPGVSTGFSAEQVSLSSLQIGRLLHMTSRLGRLTEEIDSADHVQPKNDGSAESDSFGGIKLAINDRSTLFVVLSCYVRLEETFAQALATVVEIRRRGPLSDDTYQLMPRLTVDGWSLECCQTMQIDFVIYICEQTLVRIRRSITSLHADM</sequence>
<reference key="1">
    <citation type="journal article" date="2019" name="J. Am. Chem. Soc.">
        <title>Peniphenone and penilactone formation in Penicillium crustosum via 1,4-Michael additions of ortho-quinone methide from hydroxyclavatol to gamma-butyrolactones from Crustosic Acid.</title>
        <authorList>
            <person name="Fan J."/>
            <person name="Liao G."/>
            <person name="Kindinger F."/>
            <person name="Ludwig-Radtke L."/>
            <person name="Yin W.B."/>
            <person name="Li S.M."/>
        </authorList>
    </citation>
    <scope>NUCLEOTIDE SEQUENCE [GENOMIC DNA]</scope>
    <scope>FUNCTION</scope>
    <source>
        <strain>PRB-2</strain>
    </source>
</reference>
<feature type="chain" id="PRO_0000455057" description="C6 finger transcription factor traC">
    <location>
        <begin position="1"/>
        <end position="417"/>
    </location>
</feature>
<feature type="DNA-binding region" description="Zn(2)-C6 fungal-type" evidence="1">
    <location>
        <begin position="44"/>
        <end position="73"/>
    </location>
</feature>
<feature type="region of interest" description="Disordered" evidence="2">
    <location>
        <begin position="1"/>
        <end position="40"/>
    </location>
</feature>
<feature type="region of interest" description="Disordered" evidence="2">
    <location>
        <begin position="75"/>
        <end position="94"/>
    </location>
</feature>
<feature type="region of interest" description="Disordered" evidence="2">
    <location>
        <begin position="104"/>
        <end position="128"/>
    </location>
</feature>
<feature type="compositionally biased region" description="Low complexity" evidence="2">
    <location>
        <begin position="19"/>
        <end position="37"/>
    </location>
</feature>
<feature type="compositionally biased region" description="Basic residues" evidence="2">
    <location>
        <begin position="80"/>
        <end position="94"/>
    </location>
</feature>
<feature type="compositionally biased region" description="Polar residues" evidence="2">
    <location>
        <begin position="104"/>
        <end position="114"/>
    </location>
</feature>
<protein>
    <recommendedName>
        <fullName evidence="4">C6 finger transcription factor traC</fullName>
    </recommendedName>
    <alternativeName>
        <fullName evidence="4">Terrestric acid biosynthesis cluster protein C</fullName>
    </alternativeName>
</protein>
<name>TRAC_PENCR</name>
<organism>
    <name type="scientific">Penicillium crustosum</name>
    <name type="common">Blue mold fungus</name>
    <dbReference type="NCBI Taxonomy" id="36656"/>
    <lineage>
        <taxon>Eukaryota</taxon>
        <taxon>Fungi</taxon>
        <taxon>Dikarya</taxon>
        <taxon>Ascomycota</taxon>
        <taxon>Pezizomycotina</taxon>
        <taxon>Eurotiomycetes</taxon>
        <taxon>Eurotiomycetidae</taxon>
        <taxon>Eurotiales</taxon>
        <taxon>Aspergillaceae</taxon>
        <taxon>Penicillium</taxon>
    </lineage>
</organism>
<accession>A0A481WNP6</accession>
<comment type="function">
    <text evidence="3">C6 finger transcription factor; part of the tra gene cluster that produces terrestric acid (PubMed:30811183). The clavatol biosynthesis cluster cla and the terrestric acid cluster tra are both involved in the production of peniphenones and penilactones (PubMed:30811183).</text>
</comment>
<comment type="subcellular location">
    <subcellularLocation>
        <location evidence="1">Nucleus</location>
    </subcellularLocation>
</comment>
<proteinExistence type="inferred from homology"/>
<dbReference type="EMBL" id="MK360919">
    <property type="protein sequence ID" value="QBK15051.1"/>
    <property type="molecule type" value="Genomic_DNA"/>
</dbReference>
<dbReference type="SMR" id="A0A481WNP6"/>
<dbReference type="GO" id="GO:0005634">
    <property type="term" value="C:nucleus"/>
    <property type="evidence" value="ECO:0007669"/>
    <property type="project" value="UniProtKB-SubCell"/>
</dbReference>
<dbReference type="GO" id="GO:0003677">
    <property type="term" value="F:DNA binding"/>
    <property type="evidence" value="ECO:0007669"/>
    <property type="project" value="UniProtKB-KW"/>
</dbReference>
<dbReference type="GO" id="GO:0000981">
    <property type="term" value="F:DNA-binding transcription factor activity, RNA polymerase II-specific"/>
    <property type="evidence" value="ECO:0007669"/>
    <property type="project" value="InterPro"/>
</dbReference>
<dbReference type="GO" id="GO:0008270">
    <property type="term" value="F:zinc ion binding"/>
    <property type="evidence" value="ECO:0007669"/>
    <property type="project" value="InterPro"/>
</dbReference>
<dbReference type="CDD" id="cd00067">
    <property type="entry name" value="GAL4"/>
    <property type="match status" value="1"/>
</dbReference>
<dbReference type="Gene3D" id="4.10.240.10">
    <property type="entry name" value="Zn(2)-C6 fungal-type DNA-binding domain"/>
    <property type="match status" value="1"/>
</dbReference>
<dbReference type="InterPro" id="IPR036864">
    <property type="entry name" value="Zn2-C6_fun-type_DNA-bd_sf"/>
</dbReference>
<dbReference type="InterPro" id="IPR001138">
    <property type="entry name" value="Zn2Cys6_DnaBD"/>
</dbReference>
<dbReference type="SUPFAM" id="SSF57701">
    <property type="entry name" value="Zn2/Cys6 DNA-binding domain"/>
    <property type="match status" value="1"/>
</dbReference>
<dbReference type="PROSITE" id="PS00463">
    <property type="entry name" value="ZN2_CY6_FUNGAL_1"/>
    <property type="match status" value="1"/>
</dbReference>
<gene>
    <name evidence="4" type="primary">traC</name>
</gene>